<sequence length="51" mass="5493">MFRWAIIFAVIALLASFLGFGGVAGLSANFAYILLALAVILFIVAFVSRRT</sequence>
<keyword id="KW-1003">Cell membrane</keyword>
<keyword id="KW-0472">Membrane</keyword>
<keyword id="KW-1185">Reference proteome</keyword>
<keyword id="KW-0812">Transmembrane</keyword>
<keyword id="KW-1133">Transmembrane helix</keyword>
<comment type="subcellular location">
    <subcellularLocation>
        <location evidence="1">Cell membrane</location>
        <topology evidence="1">Multi-pass membrane protein</topology>
    </subcellularLocation>
</comment>
<comment type="similarity">
    <text evidence="1">Belongs to the UPF0391 family.</text>
</comment>
<proteinExistence type="inferred from homology"/>
<name>Y130_PSYA2</name>
<organism>
    <name type="scientific">Psychrobacter arcticus (strain DSM 17307 / VKM B-2377 / 273-4)</name>
    <dbReference type="NCBI Taxonomy" id="259536"/>
    <lineage>
        <taxon>Bacteria</taxon>
        <taxon>Pseudomonadati</taxon>
        <taxon>Pseudomonadota</taxon>
        <taxon>Gammaproteobacteria</taxon>
        <taxon>Moraxellales</taxon>
        <taxon>Moraxellaceae</taxon>
        <taxon>Psychrobacter</taxon>
    </lineage>
</organism>
<evidence type="ECO:0000255" key="1">
    <source>
        <dbReference type="HAMAP-Rule" id="MF_01361"/>
    </source>
</evidence>
<protein>
    <recommendedName>
        <fullName evidence="1">UPF0391 membrane protein Psyc_0130</fullName>
    </recommendedName>
</protein>
<reference key="1">
    <citation type="journal article" date="2010" name="Appl. Environ. Microbiol.">
        <title>The genome sequence of Psychrobacter arcticus 273-4, a psychroactive Siberian permafrost bacterium, reveals mechanisms for adaptation to low-temperature growth.</title>
        <authorList>
            <person name="Ayala-del-Rio H.L."/>
            <person name="Chain P.S."/>
            <person name="Grzymski J.J."/>
            <person name="Ponder M.A."/>
            <person name="Ivanova N."/>
            <person name="Bergholz P.W."/>
            <person name="Di Bartolo G."/>
            <person name="Hauser L."/>
            <person name="Land M."/>
            <person name="Bakermans C."/>
            <person name="Rodrigues D."/>
            <person name="Klappenbach J."/>
            <person name="Zarka D."/>
            <person name="Larimer F."/>
            <person name="Richardson P."/>
            <person name="Murray A."/>
            <person name="Thomashow M."/>
            <person name="Tiedje J.M."/>
        </authorList>
    </citation>
    <scope>NUCLEOTIDE SEQUENCE [LARGE SCALE GENOMIC DNA]</scope>
    <source>
        <strain>DSM 17307 / VKM B-2377 / 273-4</strain>
    </source>
</reference>
<gene>
    <name type="ordered locus">Psyc_0130</name>
</gene>
<feature type="chain" id="PRO_0000256764" description="UPF0391 membrane protein Psyc_0130">
    <location>
        <begin position="1"/>
        <end position="51"/>
    </location>
</feature>
<feature type="transmembrane region" description="Helical" evidence="1">
    <location>
        <begin position="6"/>
        <end position="26"/>
    </location>
</feature>
<feature type="transmembrane region" description="Helical" evidence="1">
    <location>
        <begin position="28"/>
        <end position="47"/>
    </location>
</feature>
<accession>Q4FVF4</accession>
<dbReference type="EMBL" id="CP000082">
    <property type="protein sequence ID" value="AAZ18004.1"/>
    <property type="molecule type" value="Genomic_DNA"/>
</dbReference>
<dbReference type="RefSeq" id="WP_011279443.1">
    <property type="nucleotide sequence ID" value="NC_007204.1"/>
</dbReference>
<dbReference type="STRING" id="259536.Psyc_0130"/>
<dbReference type="KEGG" id="par:Psyc_0130"/>
<dbReference type="eggNOG" id="COG5487">
    <property type="taxonomic scope" value="Bacteria"/>
</dbReference>
<dbReference type="HOGENOM" id="CLU_187346_2_0_6"/>
<dbReference type="Proteomes" id="UP000000546">
    <property type="component" value="Chromosome"/>
</dbReference>
<dbReference type="GO" id="GO:0005886">
    <property type="term" value="C:plasma membrane"/>
    <property type="evidence" value="ECO:0007669"/>
    <property type="project" value="UniProtKB-SubCell"/>
</dbReference>
<dbReference type="HAMAP" id="MF_01361">
    <property type="entry name" value="UPF0391"/>
    <property type="match status" value="1"/>
</dbReference>
<dbReference type="InterPro" id="IPR009760">
    <property type="entry name" value="DUF1328"/>
</dbReference>
<dbReference type="NCBIfam" id="NF010227">
    <property type="entry name" value="PRK13682.1-2"/>
    <property type="match status" value="1"/>
</dbReference>
<dbReference type="Pfam" id="PF07043">
    <property type="entry name" value="DUF1328"/>
    <property type="match status" value="1"/>
</dbReference>
<dbReference type="PIRSF" id="PIRSF036466">
    <property type="entry name" value="UCP036466"/>
    <property type="match status" value="1"/>
</dbReference>